<proteinExistence type="inferred from homology"/>
<reference key="1">
    <citation type="journal article" date="2009" name="J. Bacteriol.">
        <title>Genome sequence of Azotobacter vinelandii, an obligate aerobe specialized to support diverse anaerobic metabolic processes.</title>
        <authorList>
            <person name="Setubal J.C."/>
            <person name="Dos Santos P."/>
            <person name="Goldman B.S."/>
            <person name="Ertesvaag H."/>
            <person name="Espin G."/>
            <person name="Rubio L.M."/>
            <person name="Valla S."/>
            <person name="Almeida N.F."/>
            <person name="Balasubramanian D."/>
            <person name="Cromes L."/>
            <person name="Curatti L."/>
            <person name="Du Z."/>
            <person name="Godsy E."/>
            <person name="Goodner B."/>
            <person name="Hellner-Burris K."/>
            <person name="Hernandez J.A."/>
            <person name="Houmiel K."/>
            <person name="Imperial J."/>
            <person name="Kennedy C."/>
            <person name="Larson T.J."/>
            <person name="Latreille P."/>
            <person name="Ligon L.S."/>
            <person name="Lu J."/>
            <person name="Maerk M."/>
            <person name="Miller N.M."/>
            <person name="Norton S."/>
            <person name="O'Carroll I.P."/>
            <person name="Paulsen I."/>
            <person name="Raulfs E.C."/>
            <person name="Roemer R."/>
            <person name="Rosser J."/>
            <person name="Segura D."/>
            <person name="Slater S."/>
            <person name="Stricklin S.L."/>
            <person name="Studholme D.J."/>
            <person name="Sun J."/>
            <person name="Viana C.J."/>
            <person name="Wallin E."/>
            <person name="Wang B."/>
            <person name="Wheeler C."/>
            <person name="Zhu H."/>
            <person name="Dean D.R."/>
            <person name="Dixon R."/>
            <person name="Wood D."/>
        </authorList>
    </citation>
    <scope>NUCLEOTIDE SEQUENCE [LARGE SCALE GENOMIC DNA]</scope>
    <source>
        <strain>DJ / ATCC BAA-1303</strain>
    </source>
</reference>
<accession>C1DSS0</accession>
<comment type="function">
    <text evidence="1">Involved in the biosynthesis of isopentenyl diphosphate (IPP) and dimethylallyl diphosphate (DMAPP), two major building blocks of isoprenoid compounds. Catalyzes the conversion of 4-diphosphocytidyl-2-C-methyl-D-erythritol 2-phosphate (CDP-ME2P) to 2-C-methyl-D-erythritol 2,4-cyclodiphosphate (ME-CPP) with a corresponding release of cytidine 5-monophosphate (CMP).</text>
</comment>
<comment type="catalytic activity">
    <reaction evidence="1">
        <text>4-CDP-2-C-methyl-D-erythritol 2-phosphate = 2-C-methyl-D-erythritol 2,4-cyclic diphosphate + CMP</text>
        <dbReference type="Rhea" id="RHEA:23864"/>
        <dbReference type="ChEBI" id="CHEBI:57919"/>
        <dbReference type="ChEBI" id="CHEBI:58483"/>
        <dbReference type="ChEBI" id="CHEBI:60377"/>
        <dbReference type="EC" id="4.6.1.12"/>
    </reaction>
</comment>
<comment type="cofactor">
    <cofactor evidence="1">
        <name>a divalent metal cation</name>
        <dbReference type="ChEBI" id="CHEBI:60240"/>
    </cofactor>
    <text evidence="1">Binds 1 divalent metal cation per subunit.</text>
</comment>
<comment type="pathway">
    <text evidence="1">Isoprenoid biosynthesis; isopentenyl diphosphate biosynthesis via DXP pathway; isopentenyl diphosphate from 1-deoxy-D-xylulose 5-phosphate: step 4/6.</text>
</comment>
<comment type="subunit">
    <text evidence="1">Homotrimer.</text>
</comment>
<comment type="similarity">
    <text evidence="1">Belongs to the IspF family.</text>
</comment>
<name>ISPF_AZOVD</name>
<keyword id="KW-0414">Isoprene biosynthesis</keyword>
<keyword id="KW-0456">Lyase</keyword>
<keyword id="KW-0479">Metal-binding</keyword>
<dbReference type="EC" id="4.6.1.12" evidence="1"/>
<dbReference type="EMBL" id="CP001157">
    <property type="protein sequence ID" value="ACO80013.1"/>
    <property type="molecule type" value="Genomic_DNA"/>
</dbReference>
<dbReference type="RefSeq" id="WP_012702388.1">
    <property type="nucleotide sequence ID" value="NC_012560.1"/>
</dbReference>
<dbReference type="SMR" id="C1DSS0"/>
<dbReference type="STRING" id="322710.Avin_38730"/>
<dbReference type="EnsemblBacteria" id="ACO80013">
    <property type="protein sequence ID" value="ACO80013"/>
    <property type="gene ID" value="Avin_38730"/>
</dbReference>
<dbReference type="GeneID" id="88186832"/>
<dbReference type="KEGG" id="avn:Avin_38730"/>
<dbReference type="eggNOG" id="COG0245">
    <property type="taxonomic scope" value="Bacteria"/>
</dbReference>
<dbReference type="HOGENOM" id="CLU_084630_2_0_6"/>
<dbReference type="OrthoDB" id="9804336at2"/>
<dbReference type="UniPathway" id="UPA00056">
    <property type="reaction ID" value="UER00095"/>
</dbReference>
<dbReference type="Proteomes" id="UP000002424">
    <property type="component" value="Chromosome"/>
</dbReference>
<dbReference type="GO" id="GO:0008685">
    <property type="term" value="F:2-C-methyl-D-erythritol 2,4-cyclodiphosphate synthase activity"/>
    <property type="evidence" value="ECO:0007669"/>
    <property type="project" value="UniProtKB-UniRule"/>
</dbReference>
<dbReference type="GO" id="GO:0046872">
    <property type="term" value="F:metal ion binding"/>
    <property type="evidence" value="ECO:0007669"/>
    <property type="project" value="UniProtKB-KW"/>
</dbReference>
<dbReference type="GO" id="GO:0019288">
    <property type="term" value="P:isopentenyl diphosphate biosynthetic process, methylerythritol 4-phosphate pathway"/>
    <property type="evidence" value="ECO:0007669"/>
    <property type="project" value="UniProtKB-UniRule"/>
</dbReference>
<dbReference type="GO" id="GO:0016114">
    <property type="term" value="P:terpenoid biosynthetic process"/>
    <property type="evidence" value="ECO:0007669"/>
    <property type="project" value="InterPro"/>
</dbReference>
<dbReference type="CDD" id="cd00554">
    <property type="entry name" value="MECDP_synthase"/>
    <property type="match status" value="1"/>
</dbReference>
<dbReference type="FunFam" id="3.30.1330.50:FF:000001">
    <property type="entry name" value="2-C-methyl-D-erythritol 2,4-cyclodiphosphate synthase"/>
    <property type="match status" value="1"/>
</dbReference>
<dbReference type="Gene3D" id="3.30.1330.50">
    <property type="entry name" value="2-C-methyl-D-erythritol 2,4-cyclodiphosphate synthase"/>
    <property type="match status" value="1"/>
</dbReference>
<dbReference type="HAMAP" id="MF_00107">
    <property type="entry name" value="IspF"/>
    <property type="match status" value="1"/>
</dbReference>
<dbReference type="InterPro" id="IPR003526">
    <property type="entry name" value="MECDP_synthase"/>
</dbReference>
<dbReference type="InterPro" id="IPR020555">
    <property type="entry name" value="MECDP_synthase_CS"/>
</dbReference>
<dbReference type="InterPro" id="IPR036571">
    <property type="entry name" value="MECDP_synthase_sf"/>
</dbReference>
<dbReference type="NCBIfam" id="TIGR00151">
    <property type="entry name" value="ispF"/>
    <property type="match status" value="1"/>
</dbReference>
<dbReference type="PANTHER" id="PTHR43181">
    <property type="entry name" value="2-C-METHYL-D-ERYTHRITOL 2,4-CYCLODIPHOSPHATE SYNTHASE, CHLOROPLASTIC"/>
    <property type="match status" value="1"/>
</dbReference>
<dbReference type="PANTHER" id="PTHR43181:SF1">
    <property type="entry name" value="2-C-METHYL-D-ERYTHRITOL 2,4-CYCLODIPHOSPHATE SYNTHASE, CHLOROPLASTIC"/>
    <property type="match status" value="1"/>
</dbReference>
<dbReference type="Pfam" id="PF02542">
    <property type="entry name" value="YgbB"/>
    <property type="match status" value="1"/>
</dbReference>
<dbReference type="SUPFAM" id="SSF69765">
    <property type="entry name" value="IpsF-like"/>
    <property type="match status" value="1"/>
</dbReference>
<dbReference type="PROSITE" id="PS01350">
    <property type="entry name" value="ISPF"/>
    <property type="match status" value="1"/>
</dbReference>
<sequence>MRIGHGYDVHRFAEGDFVTLGGVRIPHRFGLLAHSDGDVLLHALCDALLGAAALGDIGRHFPDTDPRFKGVDSRVLLRHVVALVREKGWRVGNVDATIVAQAPKMAPHIERMRLSIAEDLQVGVEQVNVKATTTEKLGFTGREEGIAVHAVALLLAL</sequence>
<organism>
    <name type="scientific">Azotobacter vinelandii (strain DJ / ATCC BAA-1303)</name>
    <dbReference type="NCBI Taxonomy" id="322710"/>
    <lineage>
        <taxon>Bacteria</taxon>
        <taxon>Pseudomonadati</taxon>
        <taxon>Pseudomonadota</taxon>
        <taxon>Gammaproteobacteria</taxon>
        <taxon>Pseudomonadales</taxon>
        <taxon>Pseudomonadaceae</taxon>
        <taxon>Azotobacter</taxon>
    </lineage>
</organism>
<gene>
    <name evidence="1" type="primary">ispF</name>
    <name type="ordered locus">Avin_38730</name>
</gene>
<protein>
    <recommendedName>
        <fullName evidence="1">2-C-methyl-D-erythritol 2,4-cyclodiphosphate synthase</fullName>
        <shortName evidence="1">MECDP-synthase</shortName>
        <shortName evidence="1">MECPP-synthase</shortName>
        <shortName evidence="1">MECPS</shortName>
        <ecNumber evidence="1">4.6.1.12</ecNumber>
    </recommendedName>
</protein>
<feature type="chain" id="PRO_1000202872" description="2-C-methyl-D-erythritol 2,4-cyclodiphosphate synthase">
    <location>
        <begin position="1"/>
        <end position="157"/>
    </location>
</feature>
<feature type="binding site" evidence="1">
    <location>
        <begin position="8"/>
        <end position="10"/>
    </location>
    <ligand>
        <name>4-CDP-2-C-methyl-D-erythritol 2-phosphate</name>
        <dbReference type="ChEBI" id="CHEBI:57919"/>
    </ligand>
</feature>
<feature type="binding site" evidence="1">
    <location>
        <position position="8"/>
    </location>
    <ligand>
        <name>a divalent metal cation</name>
        <dbReference type="ChEBI" id="CHEBI:60240"/>
    </ligand>
</feature>
<feature type="binding site" evidence="1">
    <location>
        <position position="10"/>
    </location>
    <ligand>
        <name>a divalent metal cation</name>
        <dbReference type="ChEBI" id="CHEBI:60240"/>
    </ligand>
</feature>
<feature type="binding site" evidence="1">
    <location>
        <begin position="34"/>
        <end position="35"/>
    </location>
    <ligand>
        <name>4-CDP-2-C-methyl-D-erythritol 2-phosphate</name>
        <dbReference type="ChEBI" id="CHEBI:57919"/>
    </ligand>
</feature>
<feature type="binding site" evidence="1">
    <location>
        <position position="42"/>
    </location>
    <ligand>
        <name>a divalent metal cation</name>
        <dbReference type="ChEBI" id="CHEBI:60240"/>
    </ligand>
</feature>
<feature type="binding site" evidence="1">
    <location>
        <begin position="56"/>
        <end position="58"/>
    </location>
    <ligand>
        <name>4-CDP-2-C-methyl-D-erythritol 2-phosphate</name>
        <dbReference type="ChEBI" id="CHEBI:57919"/>
    </ligand>
</feature>
<feature type="binding site" evidence="1">
    <location>
        <begin position="61"/>
        <end position="65"/>
    </location>
    <ligand>
        <name>4-CDP-2-C-methyl-D-erythritol 2-phosphate</name>
        <dbReference type="ChEBI" id="CHEBI:57919"/>
    </ligand>
</feature>
<feature type="binding site" evidence="1">
    <location>
        <begin position="100"/>
        <end position="106"/>
    </location>
    <ligand>
        <name>4-CDP-2-C-methyl-D-erythritol 2-phosphate</name>
        <dbReference type="ChEBI" id="CHEBI:57919"/>
    </ligand>
</feature>
<feature type="binding site" evidence="1">
    <location>
        <begin position="132"/>
        <end position="135"/>
    </location>
    <ligand>
        <name>4-CDP-2-C-methyl-D-erythritol 2-phosphate</name>
        <dbReference type="ChEBI" id="CHEBI:57919"/>
    </ligand>
</feature>
<feature type="binding site" evidence="1">
    <location>
        <position position="139"/>
    </location>
    <ligand>
        <name>4-CDP-2-C-methyl-D-erythritol 2-phosphate</name>
        <dbReference type="ChEBI" id="CHEBI:57919"/>
    </ligand>
</feature>
<feature type="binding site" evidence="1">
    <location>
        <position position="142"/>
    </location>
    <ligand>
        <name>4-CDP-2-C-methyl-D-erythritol 2-phosphate</name>
        <dbReference type="ChEBI" id="CHEBI:57919"/>
    </ligand>
</feature>
<feature type="site" description="Transition state stabilizer" evidence="1">
    <location>
        <position position="34"/>
    </location>
</feature>
<feature type="site" description="Transition state stabilizer" evidence="1">
    <location>
        <position position="133"/>
    </location>
</feature>
<evidence type="ECO:0000255" key="1">
    <source>
        <dbReference type="HAMAP-Rule" id="MF_00107"/>
    </source>
</evidence>